<sequence length="470" mass="53504">MPGFDYKFLEKPKRRLLCPLCGKPMREPVQVSTCGHRFCDTCLQEFLSEGVFKCPEDQLPLDYAKIYPDPELEVQVLGLAIRCIHSEEGCRWSGPLRHLQGHLNTCSFNVVPCPNRCPAKLSRRDLPAHLQHDCPKRRLKCEFCGCDFSGEAYESHEGVCPQESVYCENKCGARMMRRLLAQHATSECPKRTQPCAYCTKEFVYDTIQSHQYQCPRLPVPCPNQCGVGTVAREDLPTHLKDSCSTAFVLCPFKESGCKHRCPKLAMGRHVEESVKPHLAMMCALVSRQRQELQELRRELEELSIGSDGVLIWKIGSYGRRLQEAKAKPNLECFSPAFYTHKYGYKLQVSAFLNGNGSGEGTHLSIYIRVLPGAFDNLLEWPFARRVTFSLLDQSDPGLAKPQHVTETFHPDPNWKNFQKPGTWRGSLDESSLGFGYPKFISHQDIRKRNYVRDDAVFIRASVELPRKILS</sequence>
<dbReference type="EC" id="2.3.2.27" evidence="2"/>
<dbReference type="EMBL" id="X92346">
    <property type="protein sequence ID" value="CAA63103.1"/>
    <property type="molecule type" value="mRNA"/>
</dbReference>
<dbReference type="EMBL" id="AF233449">
    <property type="protein sequence ID" value="AAF44757.1"/>
    <property type="molecule type" value="mRNA"/>
</dbReference>
<dbReference type="EMBL" id="AK035056">
    <property type="protein sequence ID" value="BAC28928.1"/>
    <property type="molecule type" value="mRNA"/>
</dbReference>
<dbReference type="EMBL" id="AK040877">
    <property type="protein sequence ID" value="BAC30729.1"/>
    <property type="molecule type" value="mRNA"/>
</dbReference>
<dbReference type="EMBL" id="AK053900">
    <property type="protein sequence ID" value="BAC35582.1"/>
    <property type="molecule type" value="mRNA"/>
</dbReference>
<dbReference type="EMBL" id="AL591070">
    <property type="status" value="NOT_ANNOTATED_CDS"/>
    <property type="molecule type" value="Genomic_DNA"/>
</dbReference>
<dbReference type="EMBL" id="CH466596">
    <property type="protein sequence ID" value="EDL12913.1"/>
    <property type="molecule type" value="Genomic_DNA"/>
</dbReference>
<dbReference type="CCDS" id="CCDS25090.1"/>
<dbReference type="RefSeq" id="NP_033449.2">
    <property type="nucleotide sequence ID" value="NM_009423.4"/>
</dbReference>
<dbReference type="SMR" id="Q61382"/>
<dbReference type="BioGRID" id="204305">
    <property type="interactions" value="7"/>
</dbReference>
<dbReference type="FunCoup" id="Q61382">
    <property type="interactions" value="1534"/>
</dbReference>
<dbReference type="STRING" id="10090.ENSMUSP00000017530"/>
<dbReference type="iPTMnet" id="Q61382"/>
<dbReference type="PhosphoSitePlus" id="Q61382"/>
<dbReference type="jPOST" id="Q61382"/>
<dbReference type="PaxDb" id="10090-ENSMUSP00000017530"/>
<dbReference type="PeptideAtlas" id="Q61382"/>
<dbReference type="ProteomicsDB" id="258962"/>
<dbReference type="Antibodypedia" id="3961">
    <property type="antibodies" value="321 antibodies from 39 providers"/>
</dbReference>
<dbReference type="DNASU" id="22032"/>
<dbReference type="Ensembl" id="ENSMUST00000017530.4">
    <property type="protein sequence ID" value="ENSMUSP00000017530.4"/>
    <property type="gene ID" value="ENSMUSG00000017386.11"/>
</dbReference>
<dbReference type="GeneID" id="22032"/>
<dbReference type="KEGG" id="mmu:22032"/>
<dbReference type="UCSC" id="uc007kif.2">
    <property type="organism name" value="mouse"/>
</dbReference>
<dbReference type="AGR" id="MGI:1202880"/>
<dbReference type="CTD" id="9618"/>
<dbReference type="MGI" id="MGI:1202880">
    <property type="gene designation" value="Traf4"/>
</dbReference>
<dbReference type="VEuPathDB" id="HostDB:ENSMUSG00000017386"/>
<dbReference type="eggNOG" id="KOG0297">
    <property type="taxonomic scope" value="Eukaryota"/>
</dbReference>
<dbReference type="GeneTree" id="ENSGT00940000158628"/>
<dbReference type="HOGENOM" id="CLU_021061_6_0_1"/>
<dbReference type="InParanoid" id="Q61382"/>
<dbReference type="OMA" id="CRWNGAL"/>
<dbReference type="OrthoDB" id="5574452at2759"/>
<dbReference type="PhylomeDB" id="Q61382"/>
<dbReference type="TreeFam" id="TF321154"/>
<dbReference type="UniPathway" id="UPA00144"/>
<dbReference type="BioGRID-ORCS" id="22032">
    <property type="hits" value="0 hits in 80 CRISPR screens"/>
</dbReference>
<dbReference type="ChiTaRS" id="Traf4">
    <property type="organism name" value="mouse"/>
</dbReference>
<dbReference type="PRO" id="PR:Q61382"/>
<dbReference type="Proteomes" id="UP000000589">
    <property type="component" value="Chromosome 11"/>
</dbReference>
<dbReference type="RNAct" id="Q61382">
    <property type="molecule type" value="protein"/>
</dbReference>
<dbReference type="Bgee" id="ENSMUSG00000017386">
    <property type="expression patterns" value="Expressed in cortical plate and 217 other cell types or tissues"/>
</dbReference>
<dbReference type="GO" id="GO:0005923">
    <property type="term" value="C:bicellular tight junction"/>
    <property type="evidence" value="ECO:0007669"/>
    <property type="project" value="UniProtKB-SubCell"/>
</dbReference>
<dbReference type="GO" id="GO:0005737">
    <property type="term" value="C:cytoplasm"/>
    <property type="evidence" value="ECO:0000250"/>
    <property type="project" value="UniProtKB"/>
</dbReference>
<dbReference type="GO" id="GO:0005856">
    <property type="term" value="C:cytoskeleton"/>
    <property type="evidence" value="ECO:0007669"/>
    <property type="project" value="UniProtKB-SubCell"/>
</dbReference>
<dbReference type="GO" id="GO:0005829">
    <property type="term" value="C:cytosol"/>
    <property type="evidence" value="ECO:0007669"/>
    <property type="project" value="Ensembl"/>
</dbReference>
<dbReference type="GO" id="GO:0001650">
    <property type="term" value="C:fibrillar center"/>
    <property type="evidence" value="ECO:0007669"/>
    <property type="project" value="Ensembl"/>
</dbReference>
<dbReference type="GO" id="GO:0005654">
    <property type="term" value="C:nucleoplasm"/>
    <property type="evidence" value="ECO:0007669"/>
    <property type="project" value="Ensembl"/>
</dbReference>
<dbReference type="GO" id="GO:0005634">
    <property type="term" value="C:nucleus"/>
    <property type="evidence" value="ECO:0000250"/>
    <property type="project" value="UniProtKB"/>
</dbReference>
<dbReference type="GO" id="GO:0048471">
    <property type="term" value="C:perinuclear region of cytoplasm"/>
    <property type="evidence" value="ECO:0007669"/>
    <property type="project" value="UniProtKB-SubCell"/>
</dbReference>
<dbReference type="GO" id="GO:0005886">
    <property type="term" value="C:plasma membrane"/>
    <property type="evidence" value="ECO:0007669"/>
    <property type="project" value="UniProtKB-SubCell"/>
</dbReference>
<dbReference type="GO" id="GO:0042802">
    <property type="term" value="F:identical protein binding"/>
    <property type="evidence" value="ECO:0007669"/>
    <property type="project" value="Ensembl"/>
</dbReference>
<dbReference type="GO" id="GO:0019901">
    <property type="term" value="F:protein kinase binding"/>
    <property type="evidence" value="ECO:0000353"/>
    <property type="project" value="UniProtKB"/>
</dbReference>
<dbReference type="GO" id="GO:0031996">
    <property type="term" value="F:thioesterase binding"/>
    <property type="evidence" value="ECO:0007669"/>
    <property type="project" value="Ensembl"/>
</dbReference>
<dbReference type="GO" id="GO:0016740">
    <property type="term" value="F:transferase activity"/>
    <property type="evidence" value="ECO:0007669"/>
    <property type="project" value="UniProtKB-KW"/>
</dbReference>
<dbReference type="GO" id="GO:0005164">
    <property type="term" value="F:tumor necrosis factor receptor binding"/>
    <property type="evidence" value="ECO:0007669"/>
    <property type="project" value="Ensembl"/>
</dbReference>
<dbReference type="GO" id="GO:0031625">
    <property type="term" value="F:ubiquitin protein ligase binding"/>
    <property type="evidence" value="ECO:0007669"/>
    <property type="project" value="Ensembl"/>
</dbReference>
<dbReference type="GO" id="GO:0050699">
    <property type="term" value="F:WW domain binding"/>
    <property type="evidence" value="ECO:0007669"/>
    <property type="project" value="Ensembl"/>
</dbReference>
<dbReference type="GO" id="GO:0008270">
    <property type="term" value="F:zinc ion binding"/>
    <property type="evidence" value="ECO:0007669"/>
    <property type="project" value="UniProtKB-KW"/>
</dbReference>
<dbReference type="GO" id="GO:0006915">
    <property type="term" value="P:apoptotic process"/>
    <property type="evidence" value="ECO:0007669"/>
    <property type="project" value="UniProtKB-KW"/>
</dbReference>
<dbReference type="GO" id="GO:0045087">
    <property type="term" value="P:innate immune response"/>
    <property type="evidence" value="ECO:0007669"/>
    <property type="project" value="UniProtKB-KW"/>
</dbReference>
<dbReference type="GO" id="GO:0046330">
    <property type="term" value="P:positive regulation of JNK cascade"/>
    <property type="evidence" value="ECO:0000250"/>
    <property type="project" value="UniProtKB"/>
</dbReference>
<dbReference type="GO" id="GO:0045860">
    <property type="term" value="P:positive regulation of protein kinase activity"/>
    <property type="evidence" value="ECO:0000250"/>
    <property type="project" value="UniProtKB"/>
</dbReference>
<dbReference type="GO" id="GO:0043161">
    <property type="term" value="P:proteasome-mediated ubiquitin-dependent protein catabolic process"/>
    <property type="evidence" value="ECO:0007669"/>
    <property type="project" value="UniProtKB-UniPathway"/>
</dbReference>
<dbReference type="GO" id="GO:0042981">
    <property type="term" value="P:regulation of apoptotic process"/>
    <property type="evidence" value="ECO:0007669"/>
    <property type="project" value="InterPro"/>
</dbReference>
<dbReference type="GO" id="GO:0007585">
    <property type="term" value="P:respiratory gaseous exchange by respiratory system"/>
    <property type="evidence" value="ECO:0000315"/>
    <property type="project" value="MGI"/>
</dbReference>
<dbReference type="GO" id="GO:0030323">
    <property type="term" value="P:respiratory tube development"/>
    <property type="evidence" value="ECO:0000315"/>
    <property type="project" value="MGI"/>
</dbReference>
<dbReference type="GO" id="GO:0007165">
    <property type="term" value="P:signal transduction"/>
    <property type="evidence" value="ECO:0007669"/>
    <property type="project" value="InterPro"/>
</dbReference>
<dbReference type="CDD" id="cd03781">
    <property type="entry name" value="MATH_TRAF4"/>
    <property type="match status" value="1"/>
</dbReference>
<dbReference type="CDD" id="cd16641">
    <property type="entry name" value="mRING-HC-C3HC3D_TRAF4"/>
    <property type="match status" value="1"/>
</dbReference>
<dbReference type="FunFam" id="2.60.210.10:FF:000007">
    <property type="entry name" value="TNF receptor-associated factor"/>
    <property type="match status" value="1"/>
</dbReference>
<dbReference type="FunFam" id="3.30.40.10:FF:000381">
    <property type="entry name" value="TNF receptor-associated factor"/>
    <property type="match status" value="1"/>
</dbReference>
<dbReference type="FunFam" id="3.30.40.10:FF:000508">
    <property type="entry name" value="TNF receptor-associated factor"/>
    <property type="match status" value="1"/>
</dbReference>
<dbReference type="FunFam" id="3.30.40.10:FF:000610">
    <property type="entry name" value="TNF receptor-associated factor"/>
    <property type="match status" value="1"/>
</dbReference>
<dbReference type="FunFam" id="3.30.40.10:FF:000649">
    <property type="entry name" value="TNF receptor-associated factor"/>
    <property type="match status" value="1"/>
</dbReference>
<dbReference type="Gene3D" id="2.60.210.10">
    <property type="entry name" value="Apoptosis, Tumor Necrosis Factor Receptor Associated Protein 2, Chain A"/>
    <property type="match status" value="1"/>
</dbReference>
<dbReference type="Gene3D" id="3.30.40.10">
    <property type="entry name" value="Zinc/RING finger domain, C3HC4 (zinc finger)"/>
    <property type="match status" value="4"/>
</dbReference>
<dbReference type="InterPro" id="IPR002083">
    <property type="entry name" value="MATH/TRAF_dom"/>
</dbReference>
<dbReference type="InterPro" id="IPR012227">
    <property type="entry name" value="TNF_rcpt-assoc_TRAF_met"/>
</dbReference>
<dbReference type="InterPro" id="IPR008974">
    <property type="entry name" value="TRAF-like"/>
</dbReference>
<dbReference type="InterPro" id="IPR049342">
    <property type="entry name" value="TRAF1-6_MATH_dom"/>
</dbReference>
<dbReference type="InterPro" id="IPR037307">
    <property type="entry name" value="TRAF4_MATH"/>
</dbReference>
<dbReference type="InterPro" id="IPR018957">
    <property type="entry name" value="Znf_C3HC4_RING-type"/>
</dbReference>
<dbReference type="InterPro" id="IPR001841">
    <property type="entry name" value="Znf_RING"/>
</dbReference>
<dbReference type="InterPro" id="IPR013083">
    <property type="entry name" value="Znf_RING/FYVE/PHD"/>
</dbReference>
<dbReference type="InterPro" id="IPR017907">
    <property type="entry name" value="Znf_RING_CS"/>
</dbReference>
<dbReference type="InterPro" id="IPR001293">
    <property type="entry name" value="Znf_TRAF"/>
</dbReference>
<dbReference type="PANTHER" id="PTHR10131">
    <property type="entry name" value="TNF RECEPTOR ASSOCIATED FACTOR"/>
    <property type="match status" value="1"/>
</dbReference>
<dbReference type="PANTHER" id="PTHR10131:SF94">
    <property type="entry name" value="TNF RECEPTOR-ASSOCIATED FACTOR 4"/>
    <property type="match status" value="1"/>
</dbReference>
<dbReference type="Pfam" id="PF21355">
    <property type="entry name" value="TRAF-mep_MATH"/>
    <property type="match status" value="1"/>
</dbReference>
<dbReference type="Pfam" id="PF00097">
    <property type="entry name" value="zf-C3HC4"/>
    <property type="match status" value="1"/>
</dbReference>
<dbReference type="Pfam" id="PF02176">
    <property type="entry name" value="zf-TRAF"/>
    <property type="match status" value="2"/>
</dbReference>
<dbReference type="PIRSF" id="PIRSF015614">
    <property type="entry name" value="TRAF"/>
    <property type="match status" value="1"/>
</dbReference>
<dbReference type="SMART" id="SM00061">
    <property type="entry name" value="MATH"/>
    <property type="match status" value="1"/>
</dbReference>
<dbReference type="SMART" id="SM00184">
    <property type="entry name" value="RING"/>
    <property type="match status" value="1"/>
</dbReference>
<dbReference type="SUPFAM" id="SSF57850">
    <property type="entry name" value="RING/U-box"/>
    <property type="match status" value="1"/>
</dbReference>
<dbReference type="SUPFAM" id="SSF49599">
    <property type="entry name" value="TRAF domain-like"/>
    <property type="match status" value="4"/>
</dbReference>
<dbReference type="PROSITE" id="PS50144">
    <property type="entry name" value="MATH"/>
    <property type="match status" value="1"/>
</dbReference>
<dbReference type="PROSITE" id="PS00518">
    <property type="entry name" value="ZF_RING_1"/>
    <property type="match status" value="1"/>
</dbReference>
<dbReference type="PROSITE" id="PS50089">
    <property type="entry name" value="ZF_RING_2"/>
    <property type="match status" value="1"/>
</dbReference>
<dbReference type="PROSITE" id="PS50145">
    <property type="entry name" value="ZF_TRAF"/>
    <property type="match status" value="3"/>
</dbReference>
<evidence type="ECO:0000250" key="1"/>
<evidence type="ECO:0000250" key="2">
    <source>
        <dbReference type="UniProtKB" id="Q9BUZ4"/>
    </source>
</evidence>
<evidence type="ECO:0000255" key="3"/>
<evidence type="ECO:0000255" key="4">
    <source>
        <dbReference type="PROSITE-ProRule" id="PRU00129"/>
    </source>
</evidence>
<evidence type="ECO:0000255" key="5">
    <source>
        <dbReference type="PROSITE-ProRule" id="PRU00175"/>
    </source>
</evidence>
<evidence type="ECO:0000255" key="6">
    <source>
        <dbReference type="PROSITE-ProRule" id="PRU00207"/>
    </source>
</evidence>
<evidence type="ECO:0000269" key="7">
    <source>
    </source>
</evidence>
<evidence type="ECO:0000269" key="8">
    <source>
    </source>
</evidence>
<evidence type="ECO:0000269" key="9">
    <source>
    </source>
</evidence>
<evidence type="ECO:0000269" key="10">
    <source>
    </source>
</evidence>
<evidence type="ECO:0000269" key="11">
    <source>
    </source>
</evidence>
<evidence type="ECO:0000305" key="12"/>
<evidence type="ECO:0007744" key="13">
    <source>
    </source>
</evidence>
<organism>
    <name type="scientific">Mus musculus</name>
    <name type="common">Mouse</name>
    <dbReference type="NCBI Taxonomy" id="10090"/>
    <lineage>
        <taxon>Eukaryota</taxon>
        <taxon>Metazoa</taxon>
        <taxon>Chordata</taxon>
        <taxon>Craniata</taxon>
        <taxon>Vertebrata</taxon>
        <taxon>Euteleostomi</taxon>
        <taxon>Mammalia</taxon>
        <taxon>Eutheria</taxon>
        <taxon>Euarchontoglires</taxon>
        <taxon>Glires</taxon>
        <taxon>Rodentia</taxon>
        <taxon>Myomorpha</taxon>
        <taxon>Muroidea</taxon>
        <taxon>Muridae</taxon>
        <taxon>Murinae</taxon>
        <taxon>Mus</taxon>
        <taxon>Mus</taxon>
    </lineage>
</organism>
<reference key="1">
    <citation type="journal article" date="1998" name="Mech. Dev.">
        <title>Tumor necrosis factor receptor associated factor 4 (TRAF4) expression pattern during mouse development.</title>
        <authorList>
            <person name="Masson R."/>
            <person name="Regnier C.H."/>
            <person name="Chenard M.-P."/>
            <person name="Wendling C."/>
            <person name="Mattei M.-G."/>
            <person name="Tomasetto C."/>
            <person name="Rio M.-C."/>
        </authorList>
    </citation>
    <scope>NUCLEOTIDE SEQUENCE [MRNA]</scope>
    <scope>TISSUE SPECIFICITY</scope>
    <scope>DEVELOPMENTAL STAGE</scope>
    <source>
        <tissue>Embryonic stem cell</tissue>
    </source>
</reference>
<reference key="2">
    <citation type="journal article" date="2000" name="Mol. Immunol.">
        <title>Complete structural characterisation of the mammalian and Drosophila TRAF genes: implications for TRAF evolution and the role of RING finger splice variants.</title>
        <authorList>
            <person name="Grech A."/>
            <person name="Quinn R."/>
            <person name="Srinivasan D."/>
            <person name="Badoux X."/>
            <person name="Brink R."/>
        </authorList>
    </citation>
    <scope>NUCLEOTIDE SEQUENCE [MRNA]</scope>
    <source>
        <strain>C57BL/6J</strain>
        <tissue>Fetus</tissue>
        <tissue>Spleen</tissue>
    </source>
</reference>
<reference key="3">
    <citation type="journal article" date="2005" name="Science">
        <title>The transcriptional landscape of the mammalian genome.</title>
        <authorList>
            <person name="Carninci P."/>
            <person name="Kasukawa T."/>
            <person name="Katayama S."/>
            <person name="Gough J."/>
            <person name="Frith M.C."/>
            <person name="Maeda N."/>
            <person name="Oyama R."/>
            <person name="Ravasi T."/>
            <person name="Lenhard B."/>
            <person name="Wells C."/>
            <person name="Kodzius R."/>
            <person name="Shimokawa K."/>
            <person name="Bajic V.B."/>
            <person name="Brenner S.E."/>
            <person name="Batalov S."/>
            <person name="Forrest A.R."/>
            <person name="Zavolan M."/>
            <person name="Davis M.J."/>
            <person name="Wilming L.G."/>
            <person name="Aidinis V."/>
            <person name="Allen J.E."/>
            <person name="Ambesi-Impiombato A."/>
            <person name="Apweiler R."/>
            <person name="Aturaliya R.N."/>
            <person name="Bailey T.L."/>
            <person name="Bansal M."/>
            <person name="Baxter L."/>
            <person name="Beisel K.W."/>
            <person name="Bersano T."/>
            <person name="Bono H."/>
            <person name="Chalk A.M."/>
            <person name="Chiu K.P."/>
            <person name="Choudhary V."/>
            <person name="Christoffels A."/>
            <person name="Clutterbuck D.R."/>
            <person name="Crowe M.L."/>
            <person name="Dalla E."/>
            <person name="Dalrymple B.P."/>
            <person name="de Bono B."/>
            <person name="Della Gatta G."/>
            <person name="di Bernardo D."/>
            <person name="Down T."/>
            <person name="Engstrom P."/>
            <person name="Fagiolini M."/>
            <person name="Faulkner G."/>
            <person name="Fletcher C.F."/>
            <person name="Fukushima T."/>
            <person name="Furuno M."/>
            <person name="Futaki S."/>
            <person name="Gariboldi M."/>
            <person name="Georgii-Hemming P."/>
            <person name="Gingeras T.R."/>
            <person name="Gojobori T."/>
            <person name="Green R.E."/>
            <person name="Gustincich S."/>
            <person name="Harbers M."/>
            <person name="Hayashi Y."/>
            <person name="Hensch T.K."/>
            <person name="Hirokawa N."/>
            <person name="Hill D."/>
            <person name="Huminiecki L."/>
            <person name="Iacono M."/>
            <person name="Ikeo K."/>
            <person name="Iwama A."/>
            <person name="Ishikawa T."/>
            <person name="Jakt M."/>
            <person name="Kanapin A."/>
            <person name="Katoh M."/>
            <person name="Kawasawa Y."/>
            <person name="Kelso J."/>
            <person name="Kitamura H."/>
            <person name="Kitano H."/>
            <person name="Kollias G."/>
            <person name="Krishnan S.P."/>
            <person name="Kruger A."/>
            <person name="Kummerfeld S.K."/>
            <person name="Kurochkin I.V."/>
            <person name="Lareau L.F."/>
            <person name="Lazarevic D."/>
            <person name="Lipovich L."/>
            <person name="Liu J."/>
            <person name="Liuni S."/>
            <person name="McWilliam S."/>
            <person name="Madan Babu M."/>
            <person name="Madera M."/>
            <person name="Marchionni L."/>
            <person name="Matsuda H."/>
            <person name="Matsuzawa S."/>
            <person name="Miki H."/>
            <person name="Mignone F."/>
            <person name="Miyake S."/>
            <person name="Morris K."/>
            <person name="Mottagui-Tabar S."/>
            <person name="Mulder N."/>
            <person name="Nakano N."/>
            <person name="Nakauchi H."/>
            <person name="Ng P."/>
            <person name="Nilsson R."/>
            <person name="Nishiguchi S."/>
            <person name="Nishikawa S."/>
            <person name="Nori F."/>
            <person name="Ohara O."/>
            <person name="Okazaki Y."/>
            <person name="Orlando V."/>
            <person name="Pang K.C."/>
            <person name="Pavan W.J."/>
            <person name="Pavesi G."/>
            <person name="Pesole G."/>
            <person name="Petrovsky N."/>
            <person name="Piazza S."/>
            <person name="Reed J."/>
            <person name="Reid J.F."/>
            <person name="Ring B.Z."/>
            <person name="Ringwald M."/>
            <person name="Rost B."/>
            <person name="Ruan Y."/>
            <person name="Salzberg S.L."/>
            <person name="Sandelin A."/>
            <person name="Schneider C."/>
            <person name="Schoenbach C."/>
            <person name="Sekiguchi K."/>
            <person name="Semple C.A."/>
            <person name="Seno S."/>
            <person name="Sessa L."/>
            <person name="Sheng Y."/>
            <person name="Shibata Y."/>
            <person name="Shimada H."/>
            <person name="Shimada K."/>
            <person name="Silva D."/>
            <person name="Sinclair B."/>
            <person name="Sperling S."/>
            <person name="Stupka E."/>
            <person name="Sugiura K."/>
            <person name="Sultana R."/>
            <person name="Takenaka Y."/>
            <person name="Taki K."/>
            <person name="Tammoja K."/>
            <person name="Tan S.L."/>
            <person name="Tang S."/>
            <person name="Taylor M.S."/>
            <person name="Tegner J."/>
            <person name="Teichmann S.A."/>
            <person name="Ueda H.R."/>
            <person name="van Nimwegen E."/>
            <person name="Verardo R."/>
            <person name="Wei C.L."/>
            <person name="Yagi K."/>
            <person name="Yamanishi H."/>
            <person name="Zabarovsky E."/>
            <person name="Zhu S."/>
            <person name="Zimmer A."/>
            <person name="Hide W."/>
            <person name="Bult C."/>
            <person name="Grimmond S.M."/>
            <person name="Teasdale R.D."/>
            <person name="Liu E.T."/>
            <person name="Brusic V."/>
            <person name="Quackenbush J."/>
            <person name="Wahlestedt C."/>
            <person name="Mattick J.S."/>
            <person name="Hume D.A."/>
            <person name="Kai C."/>
            <person name="Sasaki D."/>
            <person name="Tomaru Y."/>
            <person name="Fukuda S."/>
            <person name="Kanamori-Katayama M."/>
            <person name="Suzuki M."/>
            <person name="Aoki J."/>
            <person name="Arakawa T."/>
            <person name="Iida J."/>
            <person name="Imamura K."/>
            <person name="Itoh M."/>
            <person name="Kato T."/>
            <person name="Kawaji H."/>
            <person name="Kawagashira N."/>
            <person name="Kawashima T."/>
            <person name="Kojima M."/>
            <person name="Kondo S."/>
            <person name="Konno H."/>
            <person name="Nakano K."/>
            <person name="Ninomiya N."/>
            <person name="Nishio T."/>
            <person name="Okada M."/>
            <person name="Plessy C."/>
            <person name="Shibata K."/>
            <person name="Shiraki T."/>
            <person name="Suzuki S."/>
            <person name="Tagami M."/>
            <person name="Waki K."/>
            <person name="Watahiki A."/>
            <person name="Okamura-Oho Y."/>
            <person name="Suzuki H."/>
            <person name="Kawai J."/>
            <person name="Hayashizaki Y."/>
        </authorList>
    </citation>
    <scope>NUCLEOTIDE SEQUENCE [LARGE SCALE MRNA]</scope>
    <source>
        <strain>C57BL/6J</strain>
        <tissue>Aorta</tissue>
        <tissue>Embryo</tissue>
        <tissue>Eye</tissue>
        <tissue>Vein</tissue>
    </source>
</reference>
<reference key="4">
    <citation type="journal article" date="2009" name="PLoS Biol.">
        <title>Lineage-specific biology revealed by a finished genome assembly of the mouse.</title>
        <authorList>
            <person name="Church D.M."/>
            <person name="Goodstadt L."/>
            <person name="Hillier L.W."/>
            <person name="Zody M.C."/>
            <person name="Goldstein S."/>
            <person name="She X."/>
            <person name="Bult C.J."/>
            <person name="Agarwala R."/>
            <person name="Cherry J.L."/>
            <person name="DiCuccio M."/>
            <person name="Hlavina W."/>
            <person name="Kapustin Y."/>
            <person name="Meric P."/>
            <person name="Maglott D."/>
            <person name="Birtle Z."/>
            <person name="Marques A.C."/>
            <person name="Graves T."/>
            <person name="Zhou S."/>
            <person name="Teague B."/>
            <person name="Potamousis K."/>
            <person name="Churas C."/>
            <person name="Place M."/>
            <person name="Herschleb J."/>
            <person name="Runnheim R."/>
            <person name="Forrest D."/>
            <person name="Amos-Landgraf J."/>
            <person name="Schwartz D.C."/>
            <person name="Cheng Z."/>
            <person name="Lindblad-Toh K."/>
            <person name="Eichler E.E."/>
            <person name="Ponting C.P."/>
        </authorList>
    </citation>
    <scope>NUCLEOTIDE SEQUENCE [LARGE SCALE GENOMIC DNA]</scope>
    <source>
        <strain>C57BL/6J</strain>
    </source>
</reference>
<reference key="5">
    <citation type="submission" date="2005-07" db="EMBL/GenBank/DDBJ databases">
        <authorList>
            <person name="Mural R.J."/>
            <person name="Adams M.D."/>
            <person name="Myers E.W."/>
            <person name="Smith H.O."/>
            <person name="Venter J.C."/>
        </authorList>
    </citation>
    <scope>NUCLEOTIDE SEQUENCE [LARGE SCALE GENOMIC DNA]</scope>
</reference>
<reference key="6">
    <citation type="journal article" date="2000" name="Am. J. Pathol.">
        <title>TRAF4 deficiency leads to tracheal malformation with resulting alterations in air flow to the lungs.</title>
        <authorList>
            <person name="Shiels H."/>
            <person name="Li X."/>
            <person name="Schumacker P.T."/>
            <person name="Maltepe E."/>
            <person name="Padrid P.A."/>
            <person name="Sperling A."/>
            <person name="Thompson C.B."/>
            <person name="Lindsten T."/>
        </authorList>
    </citation>
    <scope>POTENTIAL FUNCTION</scope>
    <scope>DISRUPTION PHENOTYPE</scope>
</reference>
<reference key="7">
    <citation type="journal article" date="2002" name="Proc. Natl. Acad. Sci. U.S.A.">
        <title>Impaired neural tube closure, axial skeleton malformations, and tracheal ring disruption in TRAF4-deficient mice.</title>
        <authorList>
            <person name="Regnier C.H."/>
            <person name="Masson R."/>
            <person name="Kedinger V."/>
            <person name="Textoris J."/>
            <person name="Stoll I."/>
            <person name="Chenard M.P."/>
            <person name="Dierich A."/>
            <person name="Tomasetto C."/>
            <person name="Rio M.C."/>
        </authorList>
    </citation>
    <scope>DISRUPTION PHENOTYPE</scope>
</reference>
<reference key="8">
    <citation type="journal article" date="2005" name="J. Biol. Chem.">
        <title>MEKK4 is an effector of the embryonic TRAF4 for JNK activation.</title>
        <authorList>
            <person name="Abell A.N."/>
            <person name="Johnson G.L."/>
        </authorList>
    </citation>
    <scope>INTERACTION WITH MAP3K4</scope>
</reference>
<reference key="9">
    <citation type="journal article" date="2008" name="Immunology">
        <title>Characterization of immune functions in TRAF4-deficient mice.</title>
        <authorList>
            <person name="Cherfils-Vicini J."/>
            <person name="Vingert B."/>
            <person name="Varin A."/>
            <person name="Tartour E."/>
            <person name="Fridman W.H."/>
            <person name="Sautes-Fridman C."/>
            <person name="Regnier C.H."/>
            <person name="Cremer I."/>
        </authorList>
    </citation>
    <scope>DISRUPTION PHENOTYPE</scope>
</reference>
<reference key="10">
    <citation type="journal article" date="2010" name="Cell">
        <title>A tissue-specific atlas of mouse protein phosphorylation and expression.</title>
        <authorList>
            <person name="Huttlin E.L."/>
            <person name="Jedrychowski M.P."/>
            <person name="Elias J.E."/>
            <person name="Goswami T."/>
            <person name="Rad R."/>
            <person name="Beausoleil S.A."/>
            <person name="Villen J."/>
            <person name="Haas W."/>
            <person name="Sowa M.E."/>
            <person name="Gygi S.P."/>
        </authorList>
    </citation>
    <scope>PHOSPHORYLATION [LARGE SCALE ANALYSIS] AT SER-426</scope>
    <scope>IDENTIFICATION BY MASS SPECTROMETRY [LARGE SCALE ANALYSIS]</scope>
    <source>
        <tissue>Brain</tissue>
        <tissue>Kidney</tissue>
        <tissue>Lung</tissue>
        <tissue>Spleen</tissue>
    </source>
</reference>
<reference key="11">
    <citation type="journal article" date="2013" name="Nat. Immunol.">
        <title>A combinatorial F box protein directed pathway controls TRAF adaptor stability to regulate inflammation.</title>
        <authorList>
            <person name="Chen B.B."/>
            <person name="Coon T.A."/>
            <person name="Glasser J.R."/>
            <person name="McVerry B.J."/>
            <person name="Zhao J."/>
            <person name="Zhao Y."/>
            <person name="Zou C."/>
            <person name="Ellis B."/>
            <person name="Sciurba F.C."/>
            <person name="Zhang Y."/>
            <person name="Mallampalli R.K."/>
        </authorList>
    </citation>
    <scope>UBIQUITINATION AT LYS-263</scope>
    <scope>MUTAGENESIS OF LYS-263 AND TRP-312</scope>
</reference>
<feature type="chain" id="PRO_0000056404" description="TNF receptor-associated factor 4">
    <location>
        <begin position="1"/>
        <end position="470"/>
    </location>
</feature>
<feature type="domain" description="MATH" evidence="4">
    <location>
        <begin position="307"/>
        <end position="462"/>
    </location>
</feature>
<feature type="zinc finger region" description="RING-type" evidence="5">
    <location>
        <begin position="18"/>
        <end position="58"/>
    </location>
</feature>
<feature type="zinc finger region" description="TRAF-type 1" evidence="6">
    <location>
        <begin position="101"/>
        <end position="154"/>
    </location>
</feature>
<feature type="zinc finger region" description="TRAF-type 2" evidence="6">
    <location>
        <begin position="155"/>
        <end position="208"/>
    </location>
</feature>
<feature type="zinc finger region" description="TRAF-type 3" evidence="6">
    <location>
        <begin position="209"/>
        <end position="267"/>
    </location>
</feature>
<feature type="coiled-coil region" evidence="3">
    <location>
        <begin position="277"/>
        <end position="310"/>
    </location>
</feature>
<feature type="modified residue" description="Phosphoserine" evidence="13">
    <location>
        <position position="426"/>
    </location>
</feature>
<feature type="cross-link" description="Glycyl lysine isopeptide (Lys-Gly) (interchain with G-Cter in ubiquitin)" evidence="10">
    <location>
        <position position="263"/>
    </location>
</feature>
<feature type="mutagenesis site" description="Abolished ubiquitination by the SCF(FBXL2) complex." evidence="10">
    <original>K</original>
    <variation>R</variation>
    <location>
        <position position="263"/>
    </location>
</feature>
<feature type="mutagenesis site" description="Decreased interaction with FBXL2." evidence="10">
    <original>W</original>
    <variation>A</variation>
    <location>
        <position position="312"/>
    </location>
</feature>
<feature type="sequence conflict" description="In Ref. 1; CAA63103." evidence="12" ref="1">
    <original>F</original>
    <variation>L</variation>
    <location>
        <position position="4"/>
    </location>
</feature>
<feature type="sequence conflict" description="In Ref. 1; CAA63103." evidence="12" ref="1">
    <original>L</original>
    <variation>P</variation>
    <location>
        <position position="9"/>
    </location>
</feature>
<feature type="sequence conflict" description="In Ref. 1; CAA63103." evidence="12" ref="1">
    <original>EPVQ</original>
    <variation>DSVE</variation>
    <location>
        <begin position="27"/>
        <end position="30"/>
    </location>
</feature>
<feature type="sequence conflict" description="In Ref. 1; CAA63103." evidence="12" ref="1">
    <original>F</original>
    <variation>Y</variation>
    <location>
        <position position="38"/>
    </location>
</feature>
<feature type="sequence conflict" description="In Ref. 1; CAA63103." evidence="12" ref="1">
    <original>T</original>
    <variation>N</variation>
    <location>
        <position position="41"/>
    </location>
</feature>
<feature type="sequence conflict" description="In Ref. 1; CAA63103." evidence="12" ref="1">
    <original>Y</original>
    <variation>F</variation>
    <location>
        <position position="166"/>
    </location>
</feature>
<feature type="sequence conflict" description="In Ref. 1; CAA63103." evidence="12" ref="1">
    <original>S</original>
    <variation>R</variation>
    <location>
        <position position="244"/>
    </location>
</feature>
<feature type="sequence conflict" description="In Ref. 1; CAA63103." evidence="12" ref="1">
    <original>F</original>
    <variation>S</variation>
    <location>
        <position position="351"/>
    </location>
</feature>
<feature type="sequence conflict" description="In Ref. 1; CAA63103." evidence="12" ref="1">
    <original>F</original>
    <variation>L</variation>
    <location>
        <position position="382"/>
    </location>
</feature>
<accession>Q61382</accession>
<accession>Q8BHD9</accession>
<protein>
    <recommendedName>
        <fullName>TNF receptor-associated factor 4</fullName>
        <ecNumber evidence="2">2.3.2.27</ecNumber>
    </recommendedName>
    <alternativeName>
        <fullName>Cysteine-rich motif associated to RING and Traf domains protein 1</fullName>
    </alternativeName>
</protein>
<gene>
    <name type="primary">Traf4</name>
    <name type="synonym">Cart1</name>
</gene>
<name>TRAF4_MOUSE</name>
<proteinExistence type="evidence at protein level"/>
<comment type="function">
    <text evidence="1 2">Adapter protein with E3 ligase activity that is involved in many diverse biological processes including cell proliferation, migration, differentiation, DNA repair, platelet activation or apoptosis. Promotes EGFR-mediated signaling by facilitating the dimerization of EGFR and downstream AKT activation thereby promoting cell proliferation. Ubiquitinates SMURF2 through 'Lys-48'-linked ubiquitin chain leading to SMURF2 degradation through the proteasome and subsequently osteogenic differentiation. Promotes 'Lys-63'-mediated ubiquitination of CHK1 which in turn activates cell cycle arrest and activation of DNA repair. In addition, promotes an atypical 'Lys-29'-linked ubiquitination at the C-terminal end of IRS1 which is crucial for insulin-like growth factor (IGF) signal transduction (By similarity). Regulates activation of NF-kappa-B in response to signaling through Toll-like receptors. Required for normal skeleton development, and for normal development of the respiratory tract. Required for activation of RPS6KB1 in response to TNF signaling. Modulates TRAF6 functions. Inhibits adipogenic differentiation by activating pyruvate kinase PKM activity and subsequently the beta-catenin signaling pathway (By similarity).</text>
</comment>
<comment type="catalytic activity">
    <reaction evidence="2">
        <text>S-ubiquitinyl-[E2 ubiquitin-conjugating enzyme]-L-cysteine + [acceptor protein]-L-lysine = [E2 ubiquitin-conjugating enzyme]-L-cysteine + N(6)-ubiquitinyl-[acceptor protein]-L-lysine.</text>
        <dbReference type="EC" id="2.3.2.27"/>
    </reaction>
</comment>
<comment type="pathway">
    <text evidence="2">Protein degradation; proteasomal ubiquitin-dependent pathway.</text>
</comment>
<comment type="subunit">
    <text evidence="2">Homotrimer. Interacts with LTBR/TNFRSF3, NGFR/TNFRSF16, RPS6KB1 and TGFB1I1. Interacts with SMURF1. Interacts (via TRAF domain) with MAP3K4 (via kinase domain). Interacts with NCF1, TICAM1, IRAK1 and TRAF6, and is probably part of a complex containing TRAF4, NCF1, TICAM1, IRAK1 and TRAF6. Interacts (via MATH domain) with GP6 and GP1BB. Interacts with EGFR (via C-terminal region); this interaction promotes the formation of EGFR asymmetric dimers. Interacts with PKM; this interaction promotes PKM kinase activity.</text>
</comment>
<comment type="subcellular location">
    <subcellularLocation>
        <location evidence="2">Cytoplasm</location>
    </subcellularLocation>
    <subcellularLocation>
        <location evidence="2">Nucleus</location>
    </subcellularLocation>
    <subcellularLocation>
        <location evidence="2">Cytoplasm</location>
        <location evidence="2">Perinuclear region</location>
    </subcellularLocation>
    <subcellularLocation>
        <location evidence="2">Cell junction</location>
        <location evidence="2">Tight junction</location>
    </subcellularLocation>
    <subcellularLocation>
        <location evidence="2">Cell membrane</location>
        <topology evidence="2">Peripheral membrane protein</topology>
        <orientation evidence="2">Cytoplasmic side</orientation>
    </subcellularLocation>
    <subcellularLocation>
        <location evidence="2">Cytoplasm</location>
        <location evidence="2">Cytoskeleton</location>
    </subcellularLocation>
</comment>
<comment type="tissue specificity">
    <text evidence="11">Predominantly expressed in brain. Preferentially expressed by postmitotic undifferentiated neurons in developing central (CNS) and peripheral (PNS) nervous system, and in nervous tissues of sensory organs. In the embryo, protein expression was shown in brain, thymus, salivary glands and intestine. In the adult, protein expression is restricted to the brain (hippocampus and olfactory bulb).</text>
</comment>
<comment type="developmental stage">
    <text evidence="11">Strongly expressed throughout embryogenesis with a maximum from 8.5 to 13.5 dpc.</text>
</comment>
<comment type="domain">
    <text evidence="1">The coiled coil domain mediates homo- and hetero-oligomerization.</text>
</comment>
<comment type="domain">
    <text evidence="1">The MATH/TRAF domain binds to receptor cytoplasmic domains.</text>
</comment>
<comment type="PTM">
    <text evidence="2 10">Polyubiquitinated, leading to its proteasomal degradation (By similarity). Ubiquitinated at Lys-263 by the SCF(FBXL2) complex, leading to its degradation by the proteasome (PubMed:23542741).</text>
</comment>
<comment type="disruption phenotype">
    <text evidence="7 8 9">Mice exhibit considerable phenotypic variability, depending in part on the strain. In one strain pups are born at the expected Mendelian frequency, while in another strain up to one third die during embryogenesis. Mutants that reach adulthood are fertile, but have on average three pups per litter instead of ten in wild-type. Mutants have an apparently normal immune response, with no defects in the development of T and B-lymphocytes, granulocytes, macrophages and dendritic cells. Mutants have respiratory problems, due to developmental defects of the trachea, stem bronchi and rib cage. They exhibit severe skeletal alterations at the level of the spinal column, including scoliosis and kyphosis, and have curly tails. Many also display neural tube closure defects.</text>
</comment>
<comment type="similarity">
    <text evidence="12">Belongs to the TNF receptor-associated factor family. B subfamily.</text>
</comment>
<keyword id="KW-0053">Apoptosis</keyword>
<keyword id="KW-0965">Cell junction</keyword>
<keyword id="KW-1003">Cell membrane</keyword>
<keyword id="KW-0175">Coiled coil</keyword>
<keyword id="KW-0963">Cytoplasm</keyword>
<keyword id="KW-0206">Cytoskeleton</keyword>
<keyword id="KW-0217">Developmental protein</keyword>
<keyword id="KW-0391">Immunity</keyword>
<keyword id="KW-0399">Innate immunity</keyword>
<keyword id="KW-1017">Isopeptide bond</keyword>
<keyword id="KW-0472">Membrane</keyword>
<keyword id="KW-0479">Metal-binding</keyword>
<keyword id="KW-0539">Nucleus</keyword>
<keyword id="KW-0597">Phosphoprotein</keyword>
<keyword id="KW-1185">Reference proteome</keyword>
<keyword id="KW-0677">Repeat</keyword>
<keyword id="KW-0796">Tight junction</keyword>
<keyword id="KW-0808">Transferase</keyword>
<keyword id="KW-0832">Ubl conjugation</keyword>
<keyword id="KW-0833">Ubl conjugation pathway</keyword>
<keyword id="KW-0862">Zinc</keyword>
<keyword id="KW-0863">Zinc-finger</keyword>